<dbReference type="EMBL" id="L39123">
    <property type="protein sequence ID" value="AAA67892.1"/>
    <property type="molecule type" value="Genomic_DNA"/>
</dbReference>
<dbReference type="EMBL" id="X82648">
    <property type="protein sequence ID" value="CAA57974.1"/>
    <property type="molecule type" value="mRNA"/>
</dbReference>
<dbReference type="EMBL" id="AK135046">
    <property type="protein sequence ID" value="BAE22397.1"/>
    <property type="molecule type" value="mRNA"/>
</dbReference>
<dbReference type="EMBL" id="AK157917">
    <property type="protein sequence ID" value="BAE34262.1"/>
    <property type="molecule type" value="mRNA"/>
</dbReference>
<dbReference type="EMBL" id="AK158118">
    <property type="protein sequence ID" value="BAE34364.1"/>
    <property type="molecule type" value="mRNA"/>
</dbReference>
<dbReference type="EMBL" id="AK158405">
    <property type="protein sequence ID" value="BAE34491.1"/>
    <property type="molecule type" value="mRNA"/>
</dbReference>
<dbReference type="EMBL" id="AK160729">
    <property type="protein sequence ID" value="BAE35974.1"/>
    <property type="molecule type" value="mRNA"/>
</dbReference>
<dbReference type="EMBL" id="AK162392">
    <property type="protein sequence ID" value="BAE36889.1"/>
    <property type="molecule type" value="mRNA"/>
</dbReference>
<dbReference type="EMBL" id="BC145907">
    <property type="protein sequence ID" value="AAI45908.1"/>
    <property type="molecule type" value="mRNA"/>
</dbReference>
<dbReference type="EMBL" id="BC145909">
    <property type="protein sequence ID" value="AAI45910.1"/>
    <property type="molecule type" value="mRNA"/>
</dbReference>
<dbReference type="CCDS" id="CCDS28105.1"/>
<dbReference type="PIR" id="S49581">
    <property type="entry name" value="S49581"/>
</dbReference>
<dbReference type="RefSeq" id="NP_001288282.1">
    <property type="nucleotide sequence ID" value="NM_001301353.1"/>
</dbReference>
<dbReference type="RefSeq" id="NP_001288283.1">
    <property type="nucleotide sequence ID" value="NM_001301354.1"/>
</dbReference>
<dbReference type="RefSeq" id="NP_031496.2">
    <property type="nucleotide sequence ID" value="NM_007470.4"/>
</dbReference>
<dbReference type="SMR" id="P51910"/>
<dbReference type="BioGRID" id="198163">
    <property type="interactions" value="1"/>
</dbReference>
<dbReference type="FunCoup" id="P51910">
    <property type="interactions" value="87"/>
</dbReference>
<dbReference type="STRING" id="10090.ENSMUSP00000119827"/>
<dbReference type="GlyConnect" id="2131">
    <property type="glycosylation" value="1 N-Linked glycan (1 site)"/>
</dbReference>
<dbReference type="GlyCosmos" id="P51910">
    <property type="glycosylation" value="2 sites, 1 glycan"/>
</dbReference>
<dbReference type="GlyGen" id="P51910">
    <property type="glycosylation" value="2 sites, 3 N-linked glycans (2 sites)"/>
</dbReference>
<dbReference type="iPTMnet" id="P51910"/>
<dbReference type="PhosphoSitePlus" id="P51910"/>
<dbReference type="CPTAC" id="non-CPTAC-3382"/>
<dbReference type="PaxDb" id="10090-ENSMUSP00000119827"/>
<dbReference type="PeptideAtlas" id="P51910"/>
<dbReference type="ProteomicsDB" id="296381"/>
<dbReference type="Antibodypedia" id="19470">
    <property type="antibodies" value="385 antibodies from 37 providers"/>
</dbReference>
<dbReference type="DNASU" id="11815"/>
<dbReference type="Ensembl" id="ENSMUST00000115230.2">
    <property type="protein sequence ID" value="ENSMUSP00000110885.2"/>
    <property type="gene ID" value="ENSMUSG00000022548.15"/>
</dbReference>
<dbReference type="Ensembl" id="ENSMUST00000130560.8">
    <property type="protein sequence ID" value="ENSMUSP00000119827.2"/>
    <property type="gene ID" value="ENSMUSG00000022548.15"/>
</dbReference>
<dbReference type="GeneID" id="11815"/>
<dbReference type="KEGG" id="mmu:11815"/>
<dbReference type="UCSC" id="uc007yxf.2">
    <property type="organism name" value="mouse"/>
</dbReference>
<dbReference type="AGR" id="MGI:88056"/>
<dbReference type="CTD" id="347"/>
<dbReference type="MGI" id="MGI:88056">
    <property type="gene designation" value="Apod"/>
</dbReference>
<dbReference type="VEuPathDB" id="HostDB:ENSMUSG00000022548"/>
<dbReference type="eggNOG" id="KOG4824">
    <property type="taxonomic scope" value="Eukaryota"/>
</dbReference>
<dbReference type="GeneTree" id="ENSGT00510000046981"/>
<dbReference type="HOGENOM" id="CLU_068449_2_1_1"/>
<dbReference type="InParanoid" id="P51910"/>
<dbReference type="OMA" id="HKYLGRW"/>
<dbReference type="OrthoDB" id="565904at2759"/>
<dbReference type="PhylomeDB" id="P51910"/>
<dbReference type="TreeFam" id="TF324836"/>
<dbReference type="Reactome" id="R-MMU-804914">
    <property type="pathway name" value="Transport of fatty acids"/>
</dbReference>
<dbReference type="BioGRID-ORCS" id="11815">
    <property type="hits" value="0 hits in 78 CRISPR screens"/>
</dbReference>
<dbReference type="ChiTaRS" id="Apod">
    <property type="organism name" value="mouse"/>
</dbReference>
<dbReference type="PRO" id="PR:P51910"/>
<dbReference type="Proteomes" id="UP000000589">
    <property type="component" value="Chromosome 16"/>
</dbReference>
<dbReference type="RNAct" id="P51910">
    <property type="molecule type" value="protein"/>
</dbReference>
<dbReference type="Bgee" id="ENSMUSG00000022548">
    <property type="expression patterns" value="Expressed in vestibular membrane of cochlear duct and 231 other cell types or tissues"/>
</dbReference>
<dbReference type="GO" id="GO:0022626">
    <property type="term" value="C:cytosolic ribosome"/>
    <property type="evidence" value="ECO:0000250"/>
    <property type="project" value="UniProtKB"/>
</dbReference>
<dbReference type="GO" id="GO:0030425">
    <property type="term" value="C:dendrite"/>
    <property type="evidence" value="ECO:0000250"/>
    <property type="project" value="UniProtKB"/>
</dbReference>
<dbReference type="GO" id="GO:0005615">
    <property type="term" value="C:extracellular space"/>
    <property type="evidence" value="ECO:0000250"/>
    <property type="project" value="UniProtKB"/>
</dbReference>
<dbReference type="GO" id="GO:0043025">
    <property type="term" value="C:neuronal cell body"/>
    <property type="evidence" value="ECO:0000250"/>
    <property type="project" value="UniProtKB"/>
</dbReference>
<dbReference type="GO" id="GO:0048471">
    <property type="term" value="C:perinuclear region of cytoplasm"/>
    <property type="evidence" value="ECO:0000250"/>
    <property type="project" value="UniProtKB"/>
</dbReference>
<dbReference type="GO" id="GO:0015485">
    <property type="term" value="F:cholesterol binding"/>
    <property type="evidence" value="ECO:0000250"/>
    <property type="project" value="UniProtKB"/>
</dbReference>
<dbReference type="GO" id="GO:0007420">
    <property type="term" value="P:brain development"/>
    <property type="evidence" value="ECO:0007669"/>
    <property type="project" value="InterPro"/>
</dbReference>
<dbReference type="GO" id="GO:0006006">
    <property type="term" value="P:glucose metabolic process"/>
    <property type="evidence" value="ECO:0000250"/>
    <property type="project" value="UniProtKB"/>
</dbReference>
<dbReference type="GO" id="GO:0006629">
    <property type="term" value="P:lipid metabolic process"/>
    <property type="evidence" value="ECO:0000250"/>
    <property type="project" value="UniProtKB"/>
</dbReference>
<dbReference type="GO" id="GO:0006869">
    <property type="term" value="P:lipid transport"/>
    <property type="evidence" value="ECO:0007669"/>
    <property type="project" value="InterPro"/>
</dbReference>
<dbReference type="GO" id="GO:1900016">
    <property type="term" value="P:negative regulation of cytokine production involved in inflammatory response"/>
    <property type="evidence" value="ECO:0000250"/>
    <property type="project" value="UniProtKB"/>
</dbReference>
<dbReference type="GO" id="GO:0051895">
    <property type="term" value="P:negative regulation of focal adhesion assembly"/>
    <property type="evidence" value="ECO:0000250"/>
    <property type="project" value="UniProtKB"/>
</dbReference>
<dbReference type="GO" id="GO:0060588">
    <property type="term" value="P:negative regulation of lipoprotein lipid oxidation"/>
    <property type="evidence" value="ECO:0000315"/>
    <property type="project" value="UniProtKB"/>
</dbReference>
<dbReference type="GO" id="GO:0071638">
    <property type="term" value="P:negative regulation of monocyte chemotactic protein-1 production"/>
    <property type="evidence" value="ECO:0000250"/>
    <property type="project" value="UniProtKB"/>
</dbReference>
<dbReference type="GO" id="GO:0010642">
    <property type="term" value="P:negative regulation of platelet-derived growth factor receptor signaling pathway"/>
    <property type="evidence" value="ECO:0000250"/>
    <property type="project" value="UniProtKB"/>
</dbReference>
<dbReference type="GO" id="GO:0042308">
    <property type="term" value="P:negative regulation of protein import into nucleus"/>
    <property type="evidence" value="ECO:0000250"/>
    <property type="project" value="UniProtKB"/>
</dbReference>
<dbReference type="GO" id="GO:0048662">
    <property type="term" value="P:negative regulation of smooth muscle cell proliferation"/>
    <property type="evidence" value="ECO:0000250"/>
    <property type="project" value="UniProtKB"/>
</dbReference>
<dbReference type="GO" id="GO:2000098">
    <property type="term" value="P:negative regulation of smooth muscle cell-matrix adhesion"/>
    <property type="evidence" value="ECO:0000250"/>
    <property type="project" value="UniProtKB"/>
</dbReference>
<dbReference type="GO" id="GO:2000405">
    <property type="term" value="P:negative regulation of T cell migration"/>
    <property type="evidence" value="ECO:0000250"/>
    <property type="project" value="UniProtKB"/>
</dbReference>
<dbReference type="GO" id="GO:0014012">
    <property type="term" value="P:peripheral nervous system axon regeneration"/>
    <property type="evidence" value="ECO:0000250"/>
    <property type="project" value="UniProtKB"/>
</dbReference>
<dbReference type="GO" id="GO:0048678">
    <property type="term" value="P:response to axon injury"/>
    <property type="evidence" value="ECO:0000250"/>
    <property type="project" value="UniProtKB"/>
</dbReference>
<dbReference type="GO" id="GO:0000302">
    <property type="term" value="P:response to reactive oxygen species"/>
    <property type="evidence" value="ECO:0000315"/>
    <property type="project" value="UniProtKB"/>
</dbReference>
<dbReference type="GO" id="GO:0042246">
    <property type="term" value="P:tissue regeneration"/>
    <property type="evidence" value="ECO:0000250"/>
    <property type="project" value="UniProtKB"/>
</dbReference>
<dbReference type="CDD" id="cd19437">
    <property type="entry name" value="lipocalin_apoD-like"/>
    <property type="match status" value="1"/>
</dbReference>
<dbReference type="FunFam" id="2.40.128.20:FF:000003">
    <property type="entry name" value="Apolipoprotein D"/>
    <property type="match status" value="1"/>
</dbReference>
<dbReference type="Gene3D" id="2.40.128.20">
    <property type="match status" value="1"/>
</dbReference>
<dbReference type="InterPro" id="IPR026222">
    <property type="entry name" value="ApoD_vertbrte"/>
</dbReference>
<dbReference type="InterPro" id="IPR002969">
    <property type="entry name" value="ApolipopD"/>
</dbReference>
<dbReference type="InterPro" id="IPR012674">
    <property type="entry name" value="Calycin"/>
</dbReference>
<dbReference type="InterPro" id="IPR022271">
    <property type="entry name" value="Lipocalin_ApoD"/>
</dbReference>
<dbReference type="InterPro" id="IPR022272">
    <property type="entry name" value="Lipocalin_CS"/>
</dbReference>
<dbReference type="InterPro" id="IPR000566">
    <property type="entry name" value="Lipocln_cytosolic_FA-bd_dom"/>
</dbReference>
<dbReference type="PANTHER" id="PTHR10612">
    <property type="entry name" value="APOLIPOPROTEIN D"/>
    <property type="match status" value="1"/>
</dbReference>
<dbReference type="PANTHER" id="PTHR10612:SF34">
    <property type="entry name" value="APOLIPOPROTEIN D"/>
    <property type="match status" value="1"/>
</dbReference>
<dbReference type="Pfam" id="PF08212">
    <property type="entry name" value="Lipocalin_2"/>
    <property type="match status" value="1"/>
</dbReference>
<dbReference type="PIRSF" id="PIRSF036893">
    <property type="entry name" value="Lipocalin_ApoD"/>
    <property type="match status" value="1"/>
</dbReference>
<dbReference type="PRINTS" id="PR02058">
    <property type="entry name" value="APODVERTBRTE"/>
</dbReference>
<dbReference type="PRINTS" id="PR01219">
    <property type="entry name" value="APOLIPOPROTD"/>
</dbReference>
<dbReference type="PRINTS" id="PR00179">
    <property type="entry name" value="LIPOCALIN"/>
</dbReference>
<dbReference type="SUPFAM" id="SSF50814">
    <property type="entry name" value="Lipocalins"/>
    <property type="match status" value="1"/>
</dbReference>
<dbReference type="PROSITE" id="PS00213">
    <property type="entry name" value="LIPOCALIN"/>
    <property type="match status" value="1"/>
</dbReference>
<proteinExistence type="evidence at protein level"/>
<gene>
    <name type="primary">Apod</name>
</gene>
<keyword id="KW-1015">Disulfide bond</keyword>
<keyword id="KW-0325">Glycoprotein</keyword>
<keyword id="KW-0446">Lipid-binding</keyword>
<keyword id="KW-0873">Pyrrolidone carboxylic acid</keyword>
<keyword id="KW-1185">Reference proteome</keyword>
<keyword id="KW-0964">Secreted</keyword>
<keyword id="KW-0732">Signal</keyword>
<keyword id="KW-0813">Transport</keyword>
<organism>
    <name type="scientific">Mus musculus</name>
    <name type="common">Mouse</name>
    <dbReference type="NCBI Taxonomy" id="10090"/>
    <lineage>
        <taxon>Eukaryota</taxon>
        <taxon>Metazoa</taxon>
        <taxon>Chordata</taxon>
        <taxon>Craniata</taxon>
        <taxon>Vertebrata</taxon>
        <taxon>Euteleostomi</taxon>
        <taxon>Mammalia</taxon>
        <taxon>Eutheria</taxon>
        <taxon>Euarchontoglires</taxon>
        <taxon>Glires</taxon>
        <taxon>Rodentia</taxon>
        <taxon>Myomorpha</taxon>
        <taxon>Muroidea</taxon>
        <taxon>Muridae</taxon>
        <taxon>Murinae</taxon>
        <taxon>Mus</taxon>
        <taxon>Mus</taxon>
    </lineage>
</organism>
<comment type="function">
    <text>APOD occurs in the macromolecular complex with lecithin-transport and binding of bilin. Appears to be able to transport a variety of ligands in a number of different contexts.</text>
</comment>
<comment type="subunit">
    <text evidence="1">Homodimer.</text>
</comment>
<comment type="subcellular location">
    <subcellularLocation>
        <location>Secreted</location>
    </subcellularLocation>
</comment>
<comment type="tissue specificity">
    <text>Highest levels of expression in brain, testis, virgin mammary gland and salivary gland. Moderate levels in skeletal muscle, lactating mammary gland and thymus. Low levels in lung and lymph node. No expression in kidney, pancreas, liver or spleen.</text>
</comment>
<comment type="similarity">
    <text evidence="4">Belongs to the calycin superfamily. Lipocalin family.</text>
</comment>
<name>APOD_MOUSE</name>
<protein>
    <recommendedName>
        <fullName>Apolipoprotein D</fullName>
        <shortName>Apo-D</shortName>
        <shortName>ApoD</shortName>
    </recommendedName>
</protein>
<evidence type="ECO:0000250" key="1"/>
<evidence type="ECO:0000250" key="2">
    <source>
        <dbReference type="UniProtKB" id="P05090"/>
    </source>
</evidence>
<evidence type="ECO:0000255" key="3"/>
<evidence type="ECO:0000305" key="4"/>
<accession>P51910</accession>
<accession>Q3TZE7</accession>
<reference key="1">
    <citation type="journal article" date="1995" name="Brain Res. Mol. Brain Res.">
        <title>Molecular characterization and differential mRNA tissue distribution of mouse apolipoprotein D.</title>
        <authorList>
            <person name="Seguin D."/>
            <person name="Desforges M."/>
            <person name="Rassart E."/>
        </authorList>
    </citation>
    <scope>NUCLEOTIDE SEQUENCE [GENOMIC DNA]</scope>
    <source>
        <strain>BALB/cJ</strain>
        <tissue>Brain</tissue>
    </source>
</reference>
<reference key="2">
    <citation type="journal article" date="1996" name="Gene">
        <title>The murine gene encoding apolipoprotein D exhibits a unique expression pattern as compared to other species.</title>
        <authorList>
            <person name="Cofer S."/>
            <person name="Ross R.R."/>
        </authorList>
    </citation>
    <scope>NUCLEOTIDE SEQUENCE [MRNA]</scope>
    <source>
        <strain>Swiss Webster</strain>
        <tissue>Mammary gland</tissue>
    </source>
</reference>
<reference key="3">
    <citation type="journal article" date="2005" name="Science">
        <title>The transcriptional landscape of the mammalian genome.</title>
        <authorList>
            <person name="Carninci P."/>
            <person name="Kasukawa T."/>
            <person name="Katayama S."/>
            <person name="Gough J."/>
            <person name="Frith M.C."/>
            <person name="Maeda N."/>
            <person name="Oyama R."/>
            <person name="Ravasi T."/>
            <person name="Lenhard B."/>
            <person name="Wells C."/>
            <person name="Kodzius R."/>
            <person name="Shimokawa K."/>
            <person name="Bajic V.B."/>
            <person name="Brenner S.E."/>
            <person name="Batalov S."/>
            <person name="Forrest A.R."/>
            <person name="Zavolan M."/>
            <person name="Davis M.J."/>
            <person name="Wilming L.G."/>
            <person name="Aidinis V."/>
            <person name="Allen J.E."/>
            <person name="Ambesi-Impiombato A."/>
            <person name="Apweiler R."/>
            <person name="Aturaliya R.N."/>
            <person name="Bailey T.L."/>
            <person name="Bansal M."/>
            <person name="Baxter L."/>
            <person name="Beisel K.W."/>
            <person name="Bersano T."/>
            <person name="Bono H."/>
            <person name="Chalk A.M."/>
            <person name="Chiu K.P."/>
            <person name="Choudhary V."/>
            <person name="Christoffels A."/>
            <person name="Clutterbuck D.R."/>
            <person name="Crowe M.L."/>
            <person name="Dalla E."/>
            <person name="Dalrymple B.P."/>
            <person name="de Bono B."/>
            <person name="Della Gatta G."/>
            <person name="di Bernardo D."/>
            <person name="Down T."/>
            <person name="Engstrom P."/>
            <person name="Fagiolini M."/>
            <person name="Faulkner G."/>
            <person name="Fletcher C.F."/>
            <person name="Fukushima T."/>
            <person name="Furuno M."/>
            <person name="Futaki S."/>
            <person name="Gariboldi M."/>
            <person name="Georgii-Hemming P."/>
            <person name="Gingeras T.R."/>
            <person name="Gojobori T."/>
            <person name="Green R.E."/>
            <person name="Gustincich S."/>
            <person name="Harbers M."/>
            <person name="Hayashi Y."/>
            <person name="Hensch T.K."/>
            <person name="Hirokawa N."/>
            <person name="Hill D."/>
            <person name="Huminiecki L."/>
            <person name="Iacono M."/>
            <person name="Ikeo K."/>
            <person name="Iwama A."/>
            <person name="Ishikawa T."/>
            <person name="Jakt M."/>
            <person name="Kanapin A."/>
            <person name="Katoh M."/>
            <person name="Kawasawa Y."/>
            <person name="Kelso J."/>
            <person name="Kitamura H."/>
            <person name="Kitano H."/>
            <person name="Kollias G."/>
            <person name="Krishnan S.P."/>
            <person name="Kruger A."/>
            <person name="Kummerfeld S.K."/>
            <person name="Kurochkin I.V."/>
            <person name="Lareau L.F."/>
            <person name="Lazarevic D."/>
            <person name="Lipovich L."/>
            <person name="Liu J."/>
            <person name="Liuni S."/>
            <person name="McWilliam S."/>
            <person name="Madan Babu M."/>
            <person name="Madera M."/>
            <person name="Marchionni L."/>
            <person name="Matsuda H."/>
            <person name="Matsuzawa S."/>
            <person name="Miki H."/>
            <person name="Mignone F."/>
            <person name="Miyake S."/>
            <person name="Morris K."/>
            <person name="Mottagui-Tabar S."/>
            <person name="Mulder N."/>
            <person name="Nakano N."/>
            <person name="Nakauchi H."/>
            <person name="Ng P."/>
            <person name="Nilsson R."/>
            <person name="Nishiguchi S."/>
            <person name="Nishikawa S."/>
            <person name="Nori F."/>
            <person name="Ohara O."/>
            <person name="Okazaki Y."/>
            <person name="Orlando V."/>
            <person name="Pang K.C."/>
            <person name="Pavan W.J."/>
            <person name="Pavesi G."/>
            <person name="Pesole G."/>
            <person name="Petrovsky N."/>
            <person name="Piazza S."/>
            <person name="Reed J."/>
            <person name="Reid J.F."/>
            <person name="Ring B.Z."/>
            <person name="Ringwald M."/>
            <person name="Rost B."/>
            <person name="Ruan Y."/>
            <person name="Salzberg S.L."/>
            <person name="Sandelin A."/>
            <person name="Schneider C."/>
            <person name="Schoenbach C."/>
            <person name="Sekiguchi K."/>
            <person name="Semple C.A."/>
            <person name="Seno S."/>
            <person name="Sessa L."/>
            <person name="Sheng Y."/>
            <person name="Shibata Y."/>
            <person name="Shimada H."/>
            <person name="Shimada K."/>
            <person name="Silva D."/>
            <person name="Sinclair B."/>
            <person name="Sperling S."/>
            <person name="Stupka E."/>
            <person name="Sugiura K."/>
            <person name="Sultana R."/>
            <person name="Takenaka Y."/>
            <person name="Taki K."/>
            <person name="Tammoja K."/>
            <person name="Tan S.L."/>
            <person name="Tang S."/>
            <person name="Taylor M.S."/>
            <person name="Tegner J."/>
            <person name="Teichmann S.A."/>
            <person name="Ueda H.R."/>
            <person name="van Nimwegen E."/>
            <person name="Verardo R."/>
            <person name="Wei C.L."/>
            <person name="Yagi K."/>
            <person name="Yamanishi H."/>
            <person name="Zabarovsky E."/>
            <person name="Zhu S."/>
            <person name="Zimmer A."/>
            <person name="Hide W."/>
            <person name="Bult C."/>
            <person name="Grimmond S.M."/>
            <person name="Teasdale R.D."/>
            <person name="Liu E.T."/>
            <person name="Brusic V."/>
            <person name="Quackenbush J."/>
            <person name="Wahlestedt C."/>
            <person name="Mattick J.S."/>
            <person name="Hume D.A."/>
            <person name="Kai C."/>
            <person name="Sasaki D."/>
            <person name="Tomaru Y."/>
            <person name="Fukuda S."/>
            <person name="Kanamori-Katayama M."/>
            <person name="Suzuki M."/>
            <person name="Aoki J."/>
            <person name="Arakawa T."/>
            <person name="Iida J."/>
            <person name="Imamura K."/>
            <person name="Itoh M."/>
            <person name="Kato T."/>
            <person name="Kawaji H."/>
            <person name="Kawagashira N."/>
            <person name="Kawashima T."/>
            <person name="Kojima M."/>
            <person name="Kondo S."/>
            <person name="Konno H."/>
            <person name="Nakano K."/>
            <person name="Ninomiya N."/>
            <person name="Nishio T."/>
            <person name="Okada M."/>
            <person name="Plessy C."/>
            <person name="Shibata K."/>
            <person name="Shiraki T."/>
            <person name="Suzuki S."/>
            <person name="Tagami M."/>
            <person name="Waki K."/>
            <person name="Watahiki A."/>
            <person name="Okamura-Oho Y."/>
            <person name="Suzuki H."/>
            <person name="Kawai J."/>
            <person name="Hayashizaki Y."/>
        </authorList>
    </citation>
    <scope>NUCLEOTIDE SEQUENCE [LARGE SCALE MRNA]</scope>
    <source>
        <strain>C57BL/6J</strain>
        <tissue>Diencephalon</tissue>
        <tissue>Embryonic head</tissue>
        <tissue>Inner ear</tissue>
        <tissue>Olfactory bulb</tissue>
    </source>
</reference>
<reference key="4">
    <citation type="journal article" date="2004" name="Genome Res.">
        <title>The status, quality, and expansion of the NIH full-length cDNA project: the Mammalian Gene Collection (MGC).</title>
        <authorList>
            <consortium name="The MGC Project Team"/>
        </authorList>
    </citation>
    <scope>NUCLEOTIDE SEQUENCE [LARGE SCALE MRNA]</scope>
    <source>
        <tissue>Brain</tissue>
    </source>
</reference>
<reference key="5">
    <citation type="journal article" date="2010" name="Cell">
        <title>A tissue-specific atlas of mouse protein phosphorylation and expression.</title>
        <authorList>
            <person name="Huttlin E.L."/>
            <person name="Jedrychowski M.P."/>
            <person name="Elias J.E."/>
            <person name="Goswami T."/>
            <person name="Rad R."/>
            <person name="Beausoleil S.A."/>
            <person name="Villen J."/>
            <person name="Haas W."/>
            <person name="Sowa M.E."/>
            <person name="Gygi S.P."/>
        </authorList>
    </citation>
    <scope>IDENTIFICATION BY MASS SPECTROMETRY [LARGE SCALE ANALYSIS]</scope>
    <source>
        <tissue>Brain</tissue>
    </source>
</reference>
<feature type="signal peptide" evidence="1">
    <location>
        <begin position="1"/>
        <end position="20"/>
    </location>
</feature>
<feature type="chain" id="PRO_0000017874" description="Apolipoprotein D">
    <location>
        <begin position="21"/>
        <end position="189"/>
    </location>
</feature>
<feature type="modified residue" description="Pyrrolidone carboxylic acid" evidence="2">
    <location>
        <position position="21"/>
    </location>
</feature>
<feature type="glycosylation site" description="N-linked (GlcNAc...) asparagine" evidence="3">
    <location>
        <position position="65"/>
    </location>
</feature>
<feature type="glycosylation site" description="N-linked (GlcNAc...) asparagine" evidence="3">
    <location>
        <position position="98"/>
    </location>
</feature>
<feature type="disulfide bond" evidence="1">
    <location>
        <begin position="28"/>
        <end position="134"/>
    </location>
</feature>
<feature type="disulfide bond" evidence="1">
    <location>
        <begin position="61"/>
        <end position="185"/>
    </location>
</feature>
<feature type="sequence variant" description="In strain: Swiss Webster.">
    <original>V</original>
    <variation>F</variation>
    <location>
        <position position="146"/>
    </location>
</feature>
<sequence length="189" mass="21530">MVTMLMFLATLAGLFTTAKGQNFHLGKCPSPPVQENFDVKKYLGRWYEIEKIPASFEKGNCIQANYSLMENGNIEVLNKELSPDGTMNQVKGEAKQSNVSEPAKLEVQFFPLMPPAPYWILATDYENYALVYSCTTFFWLFHVDFVWILGRNPYLPPETITYLKDILTSNGIDIEKMTTTDQANCPDFL</sequence>